<evidence type="ECO:0000255" key="1">
    <source>
        <dbReference type="HAMAP-Rule" id="MF_01401"/>
    </source>
</evidence>
<accession>A7FMV2</accession>
<sequence>MQNVDNTAVIDAANALPGRLTSIPVSPLHAVHGHSMTYIPEGMDLAFFAMGCFWGAERLFWQQPGVYSTAAGYSGGHTPNPTYHEVCSGRTGHAEVVRVVFDPAVISYQQLLQIFWENHDPAQGMRQGGDVGTQYRSAIYVLTPEQEEQAHKSRERFQQAMEKAGDQRVITSEITVALPFYYAEDDHQQYLHKNPHGYCGLGGIGVCLPPNV</sequence>
<gene>
    <name evidence="1" type="primary">msrA</name>
    <name type="ordered locus">YpsIP31758_3626</name>
</gene>
<proteinExistence type="inferred from homology"/>
<reference key="1">
    <citation type="journal article" date="2007" name="PLoS Genet.">
        <title>The complete genome sequence of Yersinia pseudotuberculosis IP31758, the causative agent of Far East scarlet-like fever.</title>
        <authorList>
            <person name="Eppinger M."/>
            <person name="Rosovitz M.J."/>
            <person name="Fricke W.F."/>
            <person name="Rasko D.A."/>
            <person name="Kokorina G."/>
            <person name="Fayolle C."/>
            <person name="Lindler L.E."/>
            <person name="Carniel E."/>
            <person name="Ravel J."/>
        </authorList>
    </citation>
    <scope>NUCLEOTIDE SEQUENCE [LARGE SCALE GENOMIC DNA]</scope>
    <source>
        <strain>IP 31758</strain>
    </source>
</reference>
<name>MSRA_YERP3</name>
<organism>
    <name type="scientific">Yersinia pseudotuberculosis serotype O:1b (strain IP 31758)</name>
    <dbReference type="NCBI Taxonomy" id="349747"/>
    <lineage>
        <taxon>Bacteria</taxon>
        <taxon>Pseudomonadati</taxon>
        <taxon>Pseudomonadota</taxon>
        <taxon>Gammaproteobacteria</taxon>
        <taxon>Enterobacterales</taxon>
        <taxon>Yersiniaceae</taxon>
        <taxon>Yersinia</taxon>
    </lineage>
</organism>
<keyword id="KW-0560">Oxidoreductase</keyword>
<protein>
    <recommendedName>
        <fullName evidence="1">Peptide methionine sulfoxide reductase MsrA</fullName>
        <shortName evidence="1">Protein-methionine-S-oxide reductase</shortName>
        <ecNumber evidence="1">1.8.4.11</ecNumber>
    </recommendedName>
    <alternativeName>
        <fullName evidence="1">Peptide-methionine (S)-S-oxide reductase</fullName>
        <shortName evidence="1">Peptide Met(O) reductase</shortName>
    </alternativeName>
</protein>
<dbReference type="EC" id="1.8.4.11" evidence="1"/>
<dbReference type="EMBL" id="CP000720">
    <property type="protein sequence ID" value="ABS49276.1"/>
    <property type="molecule type" value="Genomic_DNA"/>
</dbReference>
<dbReference type="RefSeq" id="WP_002210165.1">
    <property type="nucleotide sequence ID" value="NC_009708.1"/>
</dbReference>
<dbReference type="SMR" id="A7FMV2"/>
<dbReference type="GeneID" id="57975189"/>
<dbReference type="KEGG" id="ypi:YpsIP31758_3626"/>
<dbReference type="HOGENOM" id="CLU_031040_10_3_6"/>
<dbReference type="Proteomes" id="UP000002412">
    <property type="component" value="Chromosome"/>
</dbReference>
<dbReference type="GO" id="GO:0005737">
    <property type="term" value="C:cytoplasm"/>
    <property type="evidence" value="ECO:0007669"/>
    <property type="project" value="TreeGrafter"/>
</dbReference>
<dbReference type="GO" id="GO:0036456">
    <property type="term" value="F:L-methionine-(S)-S-oxide reductase activity"/>
    <property type="evidence" value="ECO:0007669"/>
    <property type="project" value="TreeGrafter"/>
</dbReference>
<dbReference type="GO" id="GO:0008113">
    <property type="term" value="F:peptide-methionine (S)-S-oxide reductase activity"/>
    <property type="evidence" value="ECO:0007669"/>
    <property type="project" value="UniProtKB-UniRule"/>
</dbReference>
<dbReference type="GO" id="GO:0034599">
    <property type="term" value="P:cellular response to oxidative stress"/>
    <property type="evidence" value="ECO:0007669"/>
    <property type="project" value="TreeGrafter"/>
</dbReference>
<dbReference type="GO" id="GO:0036211">
    <property type="term" value="P:protein modification process"/>
    <property type="evidence" value="ECO:0007669"/>
    <property type="project" value="UniProtKB-UniRule"/>
</dbReference>
<dbReference type="FunFam" id="3.30.1060.10:FF:000001">
    <property type="entry name" value="Peptide methionine sulfoxide reductase MsrA"/>
    <property type="match status" value="1"/>
</dbReference>
<dbReference type="Gene3D" id="3.30.1060.10">
    <property type="entry name" value="Peptide methionine sulphoxide reductase MsrA"/>
    <property type="match status" value="1"/>
</dbReference>
<dbReference type="HAMAP" id="MF_01401">
    <property type="entry name" value="MsrA"/>
    <property type="match status" value="1"/>
</dbReference>
<dbReference type="InterPro" id="IPR002569">
    <property type="entry name" value="Met_Sox_Rdtase_MsrA_dom"/>
</dbReference>
<dbReference type="InterPro" id="IPR036509">
    <property type="entry name" value="Met_Sox_Rdtase_MsrA_sf"/>
</dbReference>
<dbReference type="InterPro" id="IPR050162">
    <property type="entry name" value="MsrA_MetSO_reductase"/>
</dbReference>
<dbReference type="NCBIfam" id="TIGR00401">
    <property type="entry name" value="msrA"/>
    <property type="match status" value="1"/>
</dbReference>
<dbReference type="PANTHER" id="PTHR42799">
    <property type="entry name" value="MITOCHONDRIAL PEPTIDE METHIONINE SULFOXIDE REDUCTASE"/>
    <property type="match status" value="1"/>
</dbReference>
<dbReference type="PANTHER" id="PTHR42799:SF2">
    <property type="entry name" value="MITOCHONDRIAL PEPTIDE METHIONINE SULFOXIDE REDUCTASE"/>
    <property type="match status" value="1"/>
</dbReference>
<dbReference type="Pfam" id="PF01625">
    <property type="entry name" value="PMSR"/>
    <property type="match status" value="1"/>
</dbReference>
<dbReference type="SUPFAM" id="SSF55068">
    <property type="entry name" value="Peptide methionine sulfoxide reductase"/>
    <property type="match status" value="1"/>
</dbReference>
<comment type="function">
    <text evidence="1">Has an important function as a repair enzyme for proteins that have been inactivated by oxidation. Catalyzes the reversible oxidation-reduction of methionine sulfoxide in proteins to methionine.</text>
</comment>
<comment type="catalytic activity">
    <reaction evidence="1">
        <text>L-methionyl-[protein] + [thioredoxin]-disulfide + H2O = L-methionyl-(S)-S-oxide-[protein] + [thioredoxin]-dithiol</text>
        <dbReference type="Rhea" id="RHEA:14217"/>
        <dbReference type="Rhea" id="RHEA-COMP:10698"/>
        <dbReference type="Rhea" id="RHEA-COMP:10700"/>
        <dbReference type="Rhea" id="RHEA-COMP:12313"/>
        <dbReference type="Rhea" id="RHEA-COMP:12315"/>
        <dbReference type="ChEBI" id="CHEBI:15377"/>
        <dbReference type="ChEBI" id="CHEBI:16044"/>
        <dbReference type="ChEBI" id="CHEBI:29950"/>
        <dbReference type="ChEBI" id="CHEBI:44120"/>
        <dbReference type="ChEBI" id="CHEBI:50058"/>
        <dbReference type="EC" id="1.8.4.11"/>
    </reaction>
</comment>
<comment type="catalytic activity">
    <reaction evidence="1">
        <text>[thioredoxin]-disulfide + L-methionine + H2O = L-methionine (S)-S-oxide + [thioredoxin]-dithiol</text>
        <dbReference type="Rhea" id="RHEA:19993"/>
        <dbReference type="Rhea" id="RHEA-COMP:10698"/>
        <dbReference type="Rhea" id="RHEA-COMP:10700"/>
        <dbReference type="ChEBI" id="CHEBI:15377"/>
        <dbReference type="ChEBI" id="CHEBI:29950"/>
        <dbReference type="ChEBI" id="CHEBI:50058"/>
        <dbReference type="ChEBI" id="CHEBI:57844"/>
        <dbReference type="ChEBI" id="CHEBI:58772"/>
        <dbReference type="EC" id="1.8.4.11"/>
    </reaction>
</comment>
<comment type="similarity">
    <text evidence="1">Belongs to the MsrA Met sulfoxide reductase family.</text>
</comment>
<feature type="chain" id="PRO_1000068374" description="Peptide methionine sulfoxide reductase MsrA">
    <location>
        <begin position="1"/>
        <end position="212"/>
    </location>
</feature>
<feature type="active site" evidence="1">
    <location>
        <position position="52"/>
    </location>
</feature>